<protein>
    <recommendedName>
        <fullName evidence="1">Ribosome maturation factor RimP</fullName>
    </recommendedName>
</protein>
<keyword id="KW-0963">Cytoplasm</keyword>
<keyword id="KW-0690">Ribosome biogenesis</keyword>
<reference key="1">
    <citation type="journal article" date="2007" name="PLoS Genet.">
        <title>The complete genome sequence of Yersinia pseudotuberculosis IP31758, the causative agent of Far East scarlet-like fever.</title>
        <authorList>
            <person name="Eppinger M."/>
            <person name="Rosovitz M.J."/>
            <person name="Fricke W.F."/>
            <person name="Rasko D.A."/>
            <person name="Kokorina G."/>
            <person name="Fayolle C."/>
            <person name="Lindler L.E."/>
            <person name="Carniel E."/>
            <person name="Ravel J."/>
        </authorList>
    </citation>
    <scope>NUCLEOTIDE SEQUENCE [LARGE SCALE GENOMIC DNA]</scope>
    <source>
        <strain>IP 31758</strain>
    </source>
</reference>
<sequence length="154" mass="17027">MGVGLSTLEQKLTEIISAPVEALGYELVGIEFIRGRQSTLRIYIDSDDGITVDACADVSHQVSAVLDVEDPITVAYNLEVSSPGLDRPMFTAEHYTRYLGEEVTLVLRMAMQNRRKWQGIIKAVDGEMITVTVDGKDEVFALSNIQKANLVPHF</sequence>
<dbReference type="EMBL" id="CP000720">
    <property type="protein sequence ID" value="ABS48569.1"/>
    <property type="molecule type" value="Genomic_DNA"/>
</dbReference>
<dbReference type="SMR" id="A7FMS4"/>
<dbReference type="KEGG" id="ypi:YpsIP31758_3598"/>
<dbReference type="HOGENOM" id="CLU_070525_1_1_6"/>
<dbReference type="Proteomes" id="UP000002412">
    <property type="component" value="Chromosome"/>
</dbReference>
<dbReference type="GO" id="GO:0005829">
    <property type="term" value="C:cytosol"/>
    <property type="evidence" value="ECO:0007669"/>
    <property type="project" value="TreeGrafter"/>
</dbReference>
<dbReference type="GO" id="GO:0000028">
    <property type="term" value="P:ribosomal small subunit assembly"/>
    <property type="evidence" value="ECO:0007669"/>
    <property type="project" value="TreeGrafter"/>
</dbReference>
<dbReference type="GO" id="GO:0006412">
    <property type="term" value="P:translation"/>
    <property type="evidence" value="ECO:0007669"/>
    <property type="project" value="TreeGrafter"/>
</dbReference>
<dbReference type="CDD" id="cd01734">
    <property type="entry name" value="YlxS_C"/>
    <property type="match status" value="1"/>
</dbReference>
<dbReference type="FunFam" id="2.30.30.180:FF:000001">
    <property type="entry name" value="Ribosome maturation factor RimP"/>
    <property type="match status" value="1"/>
</dbReference>
<dbReference type="FunFam" id="3.30.300.70:FF:000001">
    <property type="entry name" value="Ribosome maturation factor RimP"/>
    <property type="match status" value="1"/>
</dbReference>
<dbReference type="Gene3D" id="2.30.30.180">
    <property type="entry name" value="Ribosome maturation factor RimP, C-terminal domain"/>
    <property type="match status" value="1"/>
</dbReference>
<dbReference type="Gene3D" id="3.30.300.70">
    <property type="entry name" value="RimP-like superfamily, N-terminal"/>
    <property type="match status" value="1"/>
</dbReference>
<dbReference type="HAMAP" id="MF_01077">
    <property type="entry name" value="RimP"/>
    <property type="match status" value="1"/>
</dbReference>
<dbReference type="InterPro" id="IPR003728">
    <property type="entry name" value="Ribosome_maturation_RimP"/>
</dbReference>
<dbReference type="InterPro" id="IPR028998">
    <property type="entry name" value="RimP_C"/>
</dbReference>
<dbReference type="InterPro" id="IPR036847">
    <property type="entry name" value="RimP_C_sf"/>
</dbReference>
<dbReference type="InterPro" id="IPR028989">
    <property type="entry name" value="RimP_N"/>
</dbReference>
<dbReference type="InterPro" id="IPR035956">
    <property type="entry name" value="RimP_N_sf"/>
</dbReference>
<dbReference type="NCBIfam" id="NF000927">
    <property type="entry name" value="PRK00092.1-1"/>
    <property type="match status" value="1"/>
</dbReference>
<dbReference type="PANTHER" id="PTHR33867">
    <property type="entry name" value="RIBOSOME MATURATION FACTOR RIMP"/>
    <property type="match status" value="1"/>
</dbReference>
<dbReference type="PANTHER" id="PTHR33867:SF1">
    <property type="entry name" value="RIBOSOME MATURATION FACTOR RIMP"/>
    <property type="match status" value="1"/>
</dbReference>
<dbReference type="Pfam" id="PF17384">
    <property type="entry name" value="DUF150_C"/>
    <property type="match status" value="1"/>
</dbReference>
<dbReference type="Pfam" id="PF02576">
    <property type="entry name" value="RimP_N"/>
    <property type="match status" value="1"/>
</dbReference>
<dbReference type="SUPFAM" id="SSF74942">
    <property type="entry name" value="YhbC-like, C-terminal domain"/>
    <property type="match status" value="1"/>
</dbReference>
<dbReference type="SUPFAM" id="SSF75420">
    <property type="entry name" value="YhbC-like, N-terminal domain"/>
    <property type="match status" value="1"/>
</dbReference>
<feature type="chain" id="PRO_0000384812" description="Ribosome maturation factor RimP">
    <location>
        <begin position="1"/>
        <end position="154"/>
    </location>
</feature>
<accession>A7FMS4</accession>
<organism>
    <name type="scientific">Yersinia pseudotuberculosis serotype O:1b (strain IP 31758)</name>
    <dbReference type="NCBI Taxonomy" id="349747"/>
    <lineage>
        <taxon>Bacteria</taxon>
        <taxon>Pseudomonadati</taxon>
        <taxon>Pseudomonadota</taxon>
        <taxon>Gammaproteobacteria</taxon>
        <taxon>Enterobacterales</taxon>
        <taxon>Yersiniaceae</taxon>
        <taxon>Yersinia</taxon>
    </lineage>
</organism>
<proteinExistence type="inferred from homology"/>
<comment type="function">
    <text evidence="1">Required for maturation of 30S ribosomal subunits.</text>
</comment>
<comment type="subcellular location">
    <subcellularLocation>
        <location evidence="1">Cytoplasm</location>
    </subcellularLocation>
</comment>
<comment type="similarity">
    <text evidence="1">Belongs to the RimP family.</text>
</comment>
<name>RIMP_YERP3</name>
<evidence type="ECO:0000255" key="1">
    <source>
        <dbReference type="HAMAP-Rule" id="MF_01077"/>
    </source>
</evidence>
<gene>
    <name evidence="1" type="primary">rimP</name>
    <name type="ordered locus">YpsIP31758_3598</name>
</gene>